<feature type="chain" id="PRO_0000256872" description="Chaperonin GroEL">
    <location>
        <begin position="1"/>
        <end position="550"/>
    </location>
</feature>
<feature type="binding site" evidence="1">
    <location>
        <begin position="29"/>
        <end position="32"/>
    </location>
    <ligand>
        <name>ATP</name>
        <dbReference type="ChEBI" id="CHEBI:30616"/>
    </ligand>
</feature>
<feature type="binding site" evidence="1">
    <location>
        <position position="50"/>
    </location>
    <ligand>
        <name>ATP</name>
        <dbReference type="ChEBI" id="CHEBI:30616"/>
    </ligand>
</feature>
<feature type="binding site" evidence="1">
    <location>
        <begin position="86"/>
        <end position="90"/>
    </location>
    <ligand>
        <name>ATP</name>
        <dbReference type="ChEBI" id="CHEBI:30616"/>
    </ligand>
</feature>
<feature type="binding site" evidence="1">
    <location>
        <position position="416"/>
    </location>
    <ligand>
        <name>ATP</name>
        <dbReference type="ChEBI" id="CHEBI:30616"/>
    </ligand>
</feature>
<feature type="binding site" evidence="1">
    <location>
        <position position="498"/>
    </location>
    <ligand>
        <name>ATP</name>
        <dbReference type="ChEBI" id="CHEBI:30616"/>
    </ligand>
</feature>
<name>CH60_ANAPZ</name>
<keyword id="KW-0067">ATP-binding</keyword>
<keyword id="KW-0143">Chaperone</keyword>
<keyword id="KW-0963">Cytoplasm</keyword>
<keyword id="KW-0413">Isomerase</keyword>
<keyword id="KW-0547">Nucleotide-binding</keyword>
<reference key="1">
    <citation type="journal article" date="2006" name="PLoS Genet.">
        <title>Comparative genomics of emerging human ehrlichiosis agents.</title>
        <authorList>
            <person name="Dunning Hotopp J.C."/>
            <person name="Lin M."/>
            <person name="Madupu R."/>
            <person name="Crabtree J."/>
            <person name="Angiuoli S.V."/>
            <person name="Eisen J.A."/>
            <person name="Seshadri R."/>
            <person name="Ren Q."/>
            <person name="Wu M."/>
            <person name="Utterback T.R."/>
            <person name="Smith S."/>
            <person name="Lewis M."/>
            <person name="Khouri H."/>
            <person name="Zhang C."/>
            <person name="Niu H."/>
            <person name="Lin Q."/>
            <person name="Ohashi N."/>
            <person name="Zhi N."/>
            <person name="Nelson W.C."/>
            <person name="Brinkac L.M."/>
            <person name="Dodson R.J."/>
            <person name="Rosovitz M.J."/>
            <person name="Sundaram J.P."/>
            <person name="Daugherty S.C."/>
            <person name="Davidsen T."/>
            <person name="Durkin A.S."/>
            <person name="Gwinn M.L."/>
            <person name="Haft D.H."/>
            <person name="Selengut J.D."/>
            <person name="Sullivan S.A."/>
            <person name="Zafar N."/>
            <person name="Zhou L."/>
            <person name="Benahmed F."/>
            <person name="Forberger H."/>
            <person name="Halpin R."/>
            <person name="Mulligan S."/>
            <person name="Robinson J."/>
            <person name="White O."/>
            <person name="Rikihisa Y."/>
            <person name="Tettelin H."/>
        </authorList>
    </citation>
    <scope>NUCLEOTIDE SEQUENCE [LARGE SCALE GENOMIC DNA]</scope>
    <source>
        <strain>HZ</strain>
    </source>
</reference>
<sequence>MSNTVVTGEVLDKSIREVVRILEDAVGCTAGPKGLTVAISKPYGSPEITKDGYKVMKSIKPEEPLAAAIASIITQSASQCNDKVGDGTTTCSILTAKVIEEVSKAKAAGSDIVSIKNGILKAKEAVLTALMSMRREVEEDEIAQVATLSANGDKNIGSKIAQCVKEVGKDGVITVEESKGFKDLEVEKTDGMQFDRGYLSPYFVTNAEKMLVEFENPYIFLTEKKINLVQSILPILENVARSGRPLLIIAEDVEGEALSTLVLNKLRGGLQVAAVKAPGFGDRRKDMLGDIAVIVGAKYVVNDELAVKMEDIALSDLGTAKSVRITKDATTIIGSVDSSSESIASRTNQIKAQIENSSSDYDKEKLRERLAKLSGGVAVLKVGGSSEVEVKERKDRVEDALHATRAAVEEGVVPGGGAALLYALSSLDGLKGKNDDEQWGIDIIRRAACAPIKRIIKNSGSEEAPCVIQHLLKQNDKELIYNVDTMNYANAFTSGVMDPLKVVRIAFDLAVSLAAVFMTLNAVVVDVPSKNDAAGAGAGGMGGMGGMGGF</sequence>
<protein>
    <recommendedName>
        <fullName evidence="1">Chaperonin GroEL</fullName>
        <ecNumber evidence="1">5.6.1.7</ecNumber>
    </recommendedName>
    <alternativeName>
        <fullName evidence="1">60 kDa chaperonin</fullName>
    </alternativeName>
    <alternativeName>
        <fullName evidence="1">Chaperonin-60</fullName>
        <shortName evidence="1">Cpn60</shortName>
    </alternativeName>
</protein>
<gene>
    <name evidence="1" type="primary">groEL</name>
    <name evidence="1" type="synonym">groL</name>
    <name type="ordered locus">APH_0240</name>
</gene>
<evidence type="ECO:0000255" key="1">
    <source>
        <dbReference type="HAMAP-Rule" id="MF_00600"/>
    </source>
</evidence>
<accession>Q2GL94</accession>
<comment type="function">
    <text evidence="1">Together with its co-chaperonin GroES, plays an essential role in assisting protein folding. The GroEL-GroES system forms a nano-cage that allows encapsulation of the non-native substrate proteins and provides a physical environment optimized to promote and accelerate protein folding.</text>
</comment>
<comment type="catalytic activity">
    <reaction evidence="1">
        <text>ATP + H2O + a folded polypeptide = ADP + phosphate + an unfolded polypeptide.</text>
        <dbReference type="EC" id="5.6.1.7"/>
    </reaction>
</comment>
<comment type="subunit">
    <text evidence="1">Forms a cylinder of 14 subunits composed of two heptameric rings stacked back-to-back. Interacts with the co-chaperonin GroES.</text>
</comment>
<comment type="subcellular location">
    <subcellularLocation>
        <location evidence="1">Cytoplasm</location>
    </subcellularLocation>
</comment>
<comment type="similarity">
    <text evidence="1">Belongs to the chaperonin (HSP60) family.</text>
</comment>
<proteinExistence type="inferred from homology"/>
<organism>
    <name type="scientific">Anaplasma phagocytophilum (strain HZ)</name>
    <dbReference type="NCBI Taxonomy" id="212042"/>
    <lineage>
        <taxon>Bacteria</taxon>
        <taxon>Pseudomonadati</taxon>
        <taxon>Pseudomonadota</taxon>
        <taxon>Alphaproteobacteria</taxon>
        <taxon>Rickettsiales</taxon>
        <taxon>Anaplasmataceae</taxon>
        <taxon>Anaplasma</taxon>
        <taxon>phagocytophilum group</taxon>
    </lineage>
</organism>
<dbReference type="EC" id="5.6.1.7" evidence="1"/>
<dbReference type="EMBL" id="CP000235">
    <property type="protein sequence ID" value="ABD43256.1"/>
    <property type="molecule type" value="Genomic_DNA"/>
</dbReference>
<dbReference type="RefSeq" id="WP_011450380.1">
    <property type="nucleotide sequence ID" value="NC_007797.1"/>
</dbReference>
<dbReference type="SMR" id="Q2GL94"/>
<dbReference type="STRING" id="212042.APH_0240"/>
<dbReference type="PaxDb" id="212042-APH_0240"/>
<dbReference type="EnsemblBacteria" id="ABD43256">
    <property type="protein sequence ID" value="ABD43256"/>
    <property type="gene ID" value="APH_0240"/>
</dbReference>
<dbReference type="GeneID" id="92747553"/>
<dbReference type="KEGG" id="aph:APH_0240"/>
<dbReference type="eggNOG" id="COG0459">
    <property type="taxonomic scope" value="Bacteria"/>
</dbReference>
<dbReference type="HOGENOM" id="CLU_016503_3_0_5"/>
<dbReference type="Proteomes" id="UP000001943">
    <property type="component" value="Chromosome"/>
</dbReference>
<dbReference type="GO" id="GO:0005737">
    <property type="term" value="C:cytoplasm"/>
    <property type="evidence" value="ECO:0007669"/>
    <property type="project" value="UniProtKB-SubCell"/>
</dbReference>
<dbReference type="GO" id="GO:0005524">
    <property type="term" value="F:ATP binding"/>
    <property type="evidence" value="ECO:0007669"/>
    <property type="project" value="UniProtKB-UniRule"/>
</dbReference>
<dbReference type="GO" id="GO:0140662">
    <property type="term" value="F:ATP-dependent protein folding chaperone"/>
    <property type="evidence" value="ECO:0007669"/>
    <property type="project" value="InterPro"/>
</dbReference>
<dbReference type="GO" id="GO:0016853">
    <property type="term" value="F:isomerase activity"/>
    <property type="evidence" value="ECO:0007669"/>
    <property type="project" value="UniProtKB-KW"/>
</dbReference>
<dbReference type="GO" id="GO:0051082">
    <property type="term" value="F:unfolded protein binding"/>
    <property type="evidence" value="ECO:0007669"/>
    <property type="project" value="UniProtKB-UniRule"/>
</dbReference>
<dbReference type="GO" id="GO:0042026">
    <property type="term" value="P:protein refolding"/>
    <property type="evidence" value="ECO:0007669"/>
    <property type="project" value="UniProtKB-UniRule"/>
</dbReference>
<dbReference type="CDD" id="cd03344">
    <property type="entry name" value="GroEL"/>
    <property type="match status" value="1"/>
</dbReference>
<dbReference type="FunFam" id="3.50.7.10:FF:000001">
    <property type="entry name" value="60 kDa chaperonin"/>
    <property type="match status" value="1"/>
</dbReference>
<dbReference type="Gene3D" id="3.50.7.10">
    <property type="entry name" value="GroEL"/>
    <property type="match status" value="1"/>
</dbReference>
<dbReference type="Gene3D" id="1.10.560.10">
    <property type="entry name" value="GroEL-like equatorial domain"/>
    <property type="match status" value="1"/>
</dbReference>
<dbReference type="Gene3D" id="3.30.260.10">
    <property type="entry name" value="TCP-1-like chaperonin intermediate domain"/>
    <property type="match status" value="1"/>
</dbReference>
<dbReference type="HAMAP" id="MF_00600">
    <property type="entry name" value="CH60"/>
    <property type="match status" value="1"/>
</dbReference>
<dbReference type="InterPro" id="IPR018370">
    <property type="entry name" value="Chaperonin_Cpn60_CS"/>
</dbReference>
<dbReference type="InterPro" id="IPR001844">
    <property type="entry name" value="Cpn60/GroEL"/>
</dbReference>
<dbReference type="InterPro" id="IPR002423">
    <property type="entry name" value="Cpn60/GroEL/TCP-1"/>
</dbReference>
<dbReference type="InterPro" id="IPR027409">
    <property type="entry name" value="GroEL-like_apical_dom_sf"/>
</dbReference>
<dbReference type="InterPro" id="IPR027413">
    <property type="entry name" value="GROEL-like_equatorial_sf"/>
</dbReference>
<dbReference type="InterPro" id="IPR027410">
    <property type="entry name" value="TCP-1-like_intermed_sf"/>
</dbReference>
<dbReference type="NCBIfam" id="TIGR02348">
    <property type="entry name" value="GroEL"/>
    <property type="match status" value="1"/>
</dbReference>
<dbReference type="NCBIfam" id="NF000592">
    <property type="entry name" value="PRK00013.1"/>
    <property type="match status" value="1"/>
</dbReference>
<dbReference type="NCBIfam" id="NF009487">
    <property type="entry name" value="PRK12849.1"/>
    <property type="match status" value="1"/>
</dbReference>
<dbReference type="NCBIfam" id="NF009488">
    <property type="entry name" value="PRK12850.1"/>
    <property type="match status" value="1"/>
</dbReference>
<dbReference type="NCBIfam" id="NF009489">
    <property type="entry name" value="PRK12851.1"/>
    <property type="match status" value="1"/>
</dbReference>
<dbReference type="PANTHER" id="PTHR45633">
    <property type="entry name" value="60 KDA HEAT SHOCK PROTEIN, MITOCHONDRIAL"/>
    <property type="match status" value="1"/>
</dbReference>
<dbReference type="Pfam" id="PF00118">
    <property type="entry name" value="Cpn60_TCP1"/>
    <property type="match status" value="1"/>
</dbReference>
<dbReference type="PRINTS" id="PR00298">
    <property type="entry name" value="CHAPERONIN60"/>
</dbReference>
<dbReference type="SUPFAM" id="SSF52029">
    <property type="entry name" value="GroEL apical domain-like"/>
    <property type="match status" value="1"/>
</dbReference>
<dbReference type="SUPFAM" id="SSF48592">
    <property type="entry name" value="GroEL equatorial domain-like"/>
    <property type="match status" value="1"/>
</dbReference>
<dbReference type="SUPFAM" id="SSF54849">
    <property type="entry name" value="GroEL-intermediate domain like"/>
    <property type="match status" value="1"/>
</dbReference>
<dbReference type="PROSITE" id="PS00296">
    <property type="entry name" value="CHAPERONINS_CPN60"/>
    <property type="match status" value="1"/>
</dbReference>